<reference key="1">
    <citation type="journal article" date="1993" name="Genes Dev.">
        <title>Coupling of cell identity to signal response in yeast: interaction between the alpha-1 and STE12 proteins.</title>
        <authorList>
            <person name="Yuan Y.-L.O."/>
            <person name="Stroke I."/>
            <person name="Fields S."/>
        </authorList>
    </citation>
    <scope>NUCLEOTIDE SEQUENCE [GENOMIC DNA]</scope>
    <source>
        <strain>ATCC 8585 / CBS 2359 / DSM 70799 / NBRC 1267 / NRRL Y-1140 / WM37</strain>
    </source>
</reference>
<reference key="2">
    <citation type="journal article" date="2000" name="Genetics">
        <title>Kluyveromyces lactis Sir2p regulates cation sensitivity and maintains a specialized chromatin structure at the cryptic alpha-locus.</title>
        <authorList>
            <person name="Aastroem S.U."/>
            <person name="Kegel A."/>
            <person name="Sjoestrand J.O.O."/>
            <person name="Rine J."/>
        </authorList>
    </citation>
    <scope>NUCLEOTIDE SEQUENCE [GENOMIC DNA]</scope>
</reference>
<reference key="3">
    <citation type="journal article" date="2004" name="Nature">
        <title>Genome evolution in yeasts.</title>
        <authorList>
            <person name="Dujon B."/>
            <person name="Sherman D."/>
            <person name="Fischer G."/>
            <person name="Durrens P."/>
            <person name="Casaregola S."/>
            <person name="Lafontaine I."/>
            <person name="de Montigny J."/>
            <person name="Marck C."/>
            <person name="Neuveglise C."/>
            <person name="Talla E."/>
            <person name="Goffard N."/>
            <person name="Frangeul L."/>
            <person name="Aigle M."/>
            <person name="Anthouard V."/>
            <person name="Babour A."/>
            <person name="Barbe V."/>
            <person name="Barnay S."/>
            <person name="Blanchin S."/>
            <person name="Beckerich J.-M."/>
            <person name="Beyne E."/>
            <person name="Bleykasten C."/>
            <person name="Boisrame A."/>
            <person name="Boyer J."/>
            <person name="Cattolico L."/>
            <person name="Confanioleri F."/>
            <person name="de Daruvar A."/>
            <person name="Despons L."/>
            <person name="Fabre E."/>
            <person name="Fairhead C."/>
            <person name="Ferry-Dumazet H."/>
            <person name="Groppi A."/>
            <person name="Hantraye F."/>
            <person name="Hennequin C."/>
            <person name="Jauniaux N."/>
            <person name="Joyet P."/>
            <person name="Kachouri R."/>
            <person name="Kerrest A."/>
            <person name="Koszul R."/>
            <person name="Lemaire M."/>
            <person name="Lesur I."/>
            <person name="Ma L."/>
            <person name="Muller H."/>
            <person name="Nicaud J.-M."/>
            <person name="Nikolski M."/>
            <person name="Oztas S."/>
            <person name="Ozier-Kalogeropoulos O."/>
            <person name="Pellenz S."/>
            <person name="Potier S."/>
            <person name="Richard G.-F."/>
            <person name="Straub M.-L."/>
            <person name="Suleau A."/>
            <person name="Swennen D."/>
            <person name="Tekaia F."/>
            <person name="Wesolowski-Louvel M."/>
            <person name="Westhof E."/>
            <person name="Wirth B."/>
            <person name="Zeniou-Meyer M."/>
            <person name="Zivanovic Y."/>
            <person name="Bolotin-Fukuhara M."/>
            <person name="Thierry A."/>
            <person name="Bouchier C."/>
            <person name="Caudron B."/>
            <person name="Scarpelli C."/>
            <person name="Gaillardin C."/>
            <person name="Weissenbach J."/>
            <person name="Wincker P."/>
            <person name="Souciet J.-L."/>
        </authorList>
    </citation>
    <scope>NUCLEOTIDE SEQUENCE [LARGE SCALE GENOMIC DNA]</scope>
    <source>
        <strain>ATCC 8585 / CBS 2359 / DSM 70799 / NBRC 1267 / NRRL Y-1140 / WM37</strain>
    </source>
</reference>
<dbReference type="EMBL" id="L21155">
    <property type="protein sequence ID" value="AAA35252.1"/>
    <property type="molecule type" value="Genomic_DNA"/>
</dbReference>
<dbReference type="EMBL" id="AF195066">
    <property type="protein sequence ID" value="AAG21092.1"/>
    <property type="molecule type" value="Genomic_DNA"/>
</dbReference>
<dbReference type="EMBL" id="CR382123">
    <property type="protein sequence ID" value="CAH01060.1"/>
    <property type="molecule type" value="Genomic_DNA"/>
</dbReference>
<dbReference type="PIR" id="B47650">
    <property type="entry name" value="B47650"/>
</dbReference>
<dbReference type="RefSeq" id="XP_452210.1">
    <property type="nucleotide sequence ID" value="XM_452210.1"/>
</dbReference>
<dbReference type="DIP" id="DIP-329N"/>
<dbReference type="FunCoup" id="Q08398">
    <property type="interactions" value="48"/>
</dbReference>
<dbReference type="PaxDb" id="284590-Q08398"/>
<dbReference type="KEGG" id="kla:KLLA0_C00352g"/>
<dbReference type="eggNOG" id="ENOG502S4ZK">
    <property type="taxonomic scope" value="Eukaryota"/>
</dbReference>
<dbReference type="HOGENOM" id="CLU_1115917_0_0_1"/>
<dbReference type="InParanoid" id="Q08398"/>
<dbReference type="OMA" id="DSECMAK"/>
<dbReference type="Proteomes" id="UP000000598">
    <property type="component" value="Chromosome C"/>
</dbReference>
<dbReference type="GO" id="GO:0005634">
    <property type="term" value="C:nucleus"/>
    <property type="evidence" value="ECO:0007669"/>
    <property type="project" value="UniProtKB-SubCell"/>
</dbReference>
<dbReference type="GO" id="GO:0008301">
    <property type="term" value="F:DNA binding, bending"/>
    <property type="evidence" value="ECO:0007669"/>
    <property type="project" value="InterPro"/>
</dbReference>
<dbReference type="GO" id="GO:0045895">
    <property type="term" value="P:positive regulation of mating-type specific transcription, DNA-templated"/>
    <property type="evidence" value="ECO:0007669"/>
    <property type="project" value="InterPro"/>
</dbReference>
<dbReference type="InterPro" id="IPR006856">
    <property type="entry name" value="MATalpha_HMGbox"/>
</dbReference>
<dbReference type="Pfam" id="PF04769">
    <property type="entry name" value="MATalpha_HMGbox"/>
    <property type="match status" value="1"/>
</dbReference>
<dbReference type="PROSITE" id="PS51325">
    <property type="entry name" value="ALPHA_BOX"/>
    <property type="match status" value="1"/>
</dbReference>
<accession>Q08398</accession>
<accession>Q6CV29</accession>
<protein>
    <recommendedName>
        <fullName>Mating-type protein ALPHA1</fullName>
    </recommendedName>
    <alternativeName>
        <fullName>MATalpha1 protein</fullName>
    </alternativeName>
    <alternativeName>
        <fullName>Transcription activator Alpha1p</fullName>
    </alternativeName>
</protein>
<feature type="chain" id="PRO_0000206017" description="Mating-type protein ALPHA1">
    <location>
        <begin position="1"/>
        <end position="261"/>
    </location>
</feature>
<feature type="DNA-binding region" description="Alpha box" evidence="2">
    <location>
        <begin position="101"/>
        <end position="158"/>
    </location>
</feature>
<name>MTAL1_KLULA</name>
<organism>
    <name type="scientific">Kluyveromyces lactis (strain ATCC 8585 / CBS 2359 / DSM 70799 / NBRC 1267 / NRRL Y-1140 / WM37)</name>
    <name type="common">Yeast</name>
    <name type="synonym">Candida sphaerica</name>
    <dbReference type="NCBI Taxonomy" id="284590"/>
    <lineage>
        <taxon>Eukaryota</taxon>
        <taxon>Fungi</taxon>
        <taxon>Dikarya</taxon>
        <taxon>Ascomycota</taxon>
        <taxon>Saccharomycotina</taxon>
        <taxon>Saccharomycetes</taxon>
        <taxon>Saccharomycetales</taxon>
        <taxon>Saccharomycetaceae</taxon>
        <taxon>Kluyveromyces</taxon>
    </lineage>
</organism>
<evidence type="ECO:0000250" key="1"/>
<evidence type="ECO:0000255" key="2">
    <source>
        <dbReference type="PROSITE-ProRule" id="PRU00655"/>
    </source>
</evidence>
<gene>
    <name type="primary">MATALPHA1</name>
    <name type="synonym">alpha-1</name>
    <name type="synonym">alpha1</name>
</gene>
<gene>
    <name type="primary">HMLAPLHA1</name>
    <name type="ordered locus">KLLA0C00352g</name>
</gene>
<proteinExistence type="inferred from homology"/>
<comment type="function">
    <text evidence="1">Mating type proteins are sequence specific DNA-binding proteins that act as master switches in yeast differentiation by controlling gene expression in a cell type-specific fashion. Transcriptional activator that induces the transcription of alpha-specific genes (By similarity). Required for mating as an alpha-cell.</text>
</comment>
<comment type="subcellular location">
    <subcellularLocation>
        <location evidence="2">Nucleus</location>
    </subcellularLocation>
</comment>
<comment type="miscellaneous">
    <text>There are three genetic loci for mating type genes in K.lactis. MAT is the expression locus that determines the mating type of the cell, whereas HML (containing HMLALPHA1, HMLALPHA2 and HMLALPHA3) and HMR (containing HMRA1 and HMRA2) represent silenced repositories of mating type information. The mating type is determined by the MAT locus, which contains either a copy of HML or of HMR. Diploid cells are usually heterozygous for the MAT locus.</text>
</comment>
<comment type="similarity">
    <text evidence="2">Belongs to the MATALPHA1 family.</text>
</comment>
<keyword id="KW-0010">Activator</keyword>
<keyword id="KW-0238">DNA-binding</keyword>
<keyword id="KW-0539">Nucleus</keyword>
<keyword id="KW-1185">Reference proteome</keyword>
<keyword id="KW-0804">Transcription</keyword>
<keyword id="KW-0805">Transcription regulation</keyword>
<sequence>MKSNAPTFKVAVSKRSCSSVRKTSKKIRSGMIRKPSVSSRYRKHEGVNLYMSKVTPTSIPAPPQVLVAYIKEKVKTLNKSEVLMSLGNSNQLSSRDVKTKTKKKQINDFIAFRSYYSRLLNGILTQTELSTIISKHWTVDKQTRKNWELIAQEYNCDASGKHFFNWLEVNYGIDKQWLYEIVQYEECLTPTTKKPYVENIYNSGFKQRIDSPNQKDITFSQSDNSADWLVDPIFFDTEFLATSFDRTNLIISDCYSLMNSV</sequence>